<accession>C1CL81</accession>
<evidence type="ECO:0000255" key="1">
    <source>
        <dbReference type="HAMAP-Rule" id="MF_01526"/>
    </source>
</evidence>
<dbReference type="EMBL" id="CP000920">
    <property type="protein sequence ID" value="ACO20188.1"/>
    <property type="molecule type" value="Genomic_DNA"/>
</dbReference>
<dbReference type="RefSeq" id="WP_000065988.1">
    <property type="nucleotide sequence ID" value="NC_012467.1"/>
</dbReference>
<dbReference type="SMR" id="C1CL81"/>
<dbReference type="KEGG" id="spp:SPP_1392"/>
<dbReference type="HOGENOM" id="CLU_140243_2_0_9"/>
<dbReference type="Gene3D" id="1.20.1500.10">
    <property type="entry name" value="YheA/YmcA-like"/>
    <property type="match status" value="1"/>
</dbReference>
<dbReference type="HAMAP" id="MF_01526">
    <property type="entry name" value="UPF0342"/>
    <property type="match status" value="1"/>
</dbReference>
<dbReference type="InterPro" id="IPR010368">
    <property type="entry name" value="Com_YlbF"/>
</dbReference>
<dbReference type="InterPro" id="IPR023378">
    <property type="entry name" value="YheA/YmcA-like_dom_sf"/>
</dbReference>
<dbReference type="NCBIfam" id="NF010209">
    <property type="entry name" value="PRK13676.1-1"/>
    <property type="match status" value="1"/>
</dbReference>
<dbReference type="Pfam" id="PF06133">
    <property type="entry name" value="Com_YlbF"/>
    <property type="match status" value="1"/>
</dbReference>
<dbReference type="SUPFAM" id="SSF158622">
    <property type="entry name" value="YheA/YmcA-like"/>
    <property type="match status" value="1"/>
</dbReference>
<reference key="1">
    <citation type="journal article" date="2010" name="Genome Biol.">
        <title>Structure and dynamics of the pan-genome of Streptococcus pneumoniae and closely related species.</title>
        <authorList>
            <person name="Donati C."/>
            <person name="Hiller N.L."/>
            <person name="Tettelin H."/>
            <person name="Muzzi A."/>
            <person name="Croucher N.J."/>
            <person name="Angiuoli S.V."/>
            <person name="Oggioni M."/>
            <person name="Dunning Hotopp J.C."/>
            <person name="Hu F.Z."/>
            <person name="Riley D.R."/>
            <person name="Covacci A."/>
            <person name="Mitchell T.J."/>
            <person name="Bentley S.D."/>
            <person name="Kilian M."/>
            <person name="Ehrlich G.D."/>
            <person name="Rappuoli R."/>
            <person name="Moxon E.R."/>
            <person name="Masignani V."/>
        </authorList>
    </citation>
    <scope>NUCLEOTIDE SEQUENCE [LARGE SCALE GENOMIC DNA]</scope>
    <source>
        <strain>P1031</strain>
    </source>
</reference>
<protein>
    <recommendedName>
        <fullName evidence="1">UPF0342 protein SPP_1392</fullName>
    </recommendedName>
</protein>
<sequence length="112" mass="12480">MSNIYDSANELSRGLRGLPEYKAVKAAKDAIAADAEASKIFTEYLAFQEEIQKLAHTGQMPDASFQAKMEGFGKQIQGNSLLSEFFTKQQQLAIYLSDIEKIVFEPVSELLK</sequence>
<name>Y1392_STRZP</name>
<feature type="chain" id="PRO_1000185148" description="UPF0342 protein SPP_1392">
    <location>
        <begin position="1"/>
        <end position="112"/>
    </location>
</feature>
<proteinExistence type="inferred from homology"/>
<gene>
    <name type="ordered locus">SPP_1392</name>
</gene>
<comment type="similarity">
    <text evidence="1">Belongs to the UPF0342 family.</text>
</comment>
<organism>
    <name type="scientific">Streptococcus pneumoniae (strain P1031)</name>
    <dbReference type="NCBI Taxonomy" id="488223"/>
    <lineage>
        <taxon>Bacteria</taxon>
        <taxon>Bacillati</taxon>
        <taxon>Bacillota</taxon>
        <taxon>Bacilli</taxon>
        <taxon>Lactobacillales</taxon>
        <taxon>Streptococcaceae</taxon>
        <taxon>Streptococcus</taxon>
    </lineage>
</organism>